<accession>Q870I1</accession>
<sequence>MSDFEIIVGISSLLQVIILNIQNMLEVLLEYIGIHKRRVDISTYYDNVYFFFHFICYHLLSYCIINLRISASFICDSCSLIIMSPSYAVCDNILVT</sequence>
<evidence type="ECO:0000255" key="1"/>
<evidence type="ECO:0000269" key="2">
    <source>
    </source>
</evidence>
<evidence type="ECO:0000305" key="3"/>
<evidence type="ECO:0000305" key="4">
    <source>
    </source>
</evidence>
<dbReference type="EMBL" id="AY222081">
    <property type="protein sequence ID" value="AAP06934.1"/>
    <property type="molecule type" value="Genomic_DNA"/>
</dbReference>
<dbReference type="EMBL" id="Z74755">
    <property type="status" value="NOT_ANNOTATED_CDS"/>
    <property type="molecule type" value="Genomic_DNA"/>
</dbReference>
<dbReference type="EMBL" id="Z74756">
    <property type="status" value="NOT_ANNOTATED_CDS"/>
    <property type="molecule type" value="Genomic_DNA"/>
</dbReference>
<dbReference type="PaxDb" id="4932-YOL013W-B"/>
<dbReference type="EnsemblFungi" id="YOL013W-B_mRNA">
    <property type="protein sequence ID" value="YOL013W-B"/>
    <property type="gene ID" value="YOL013W-B"/>
</dbReference>
<dbReference type="AGR" id="SGD:S000007252"/>
<dbReference type="SGD" id="S000007252">
    <property type="gene designation" value="YOL013W-B"/>
</dbReference>
<dbReference type="HOGENOM" id="CLU_2361359_0_0_1"/>
<dbReference type="OrthoDB" id="5872161at2759"/>
<dbReference type="GO" id="GO:0016020">
    <property type="term" value="C:membrane"/>
    <property type="evidence" value="ECO:0007669"/>
    <property type="project" value="UniProtKB-SubCell"/>
</dbReference>
<feature type="chain" id="PRO_0000299687" description="Putative uncharacterized protein YOL013W-B">
    <location>
        <begin position="1"/>
        <end position="96"/>
    </location>
</feature>
<feature type="transmembrane region" description="Helical" evidence="1">
    <location>
        <begin position="1"/>
        <end position="21"/>
    </location>
</feature>
<feature type="sequence variant" description="In strain: CEN.PK 113-7D." evidence="2">
    <original>V</original>
    <variation>I</variation>
    <location>
        <position position="48"/>
    </location>
</feature>
<feature type="sequence variant" description="In strain: CEN.PK 113-7D." evidence="2">
    <original>L</original>
    <variation>S</variation>
    <location>
        <position position="59"/>
    </location>
</feature>
<feature type="sequence variant" description="In strain: CEN.PK 113-7D." evidence="2">
    <original>I</original>
    <variation>N</variation>
    <location>
        <position position="69"/>
    </location>
</feature>
<gene>
    <name type="ordered locus">YOL013W-B</name>
    <name type="ORF">YOL013W-A</name>
</gene>
<reference key="1">
    <citation type="journal article" date="2003" name="FEMS Yeast Res.">
        <title>Comparative genotyping of the Saccharomyces cerevisiae laboratory strains S288C and CEN.PK113-7D using oligonucleotide microarrays.</title>
        <authorList>
            <person name="Daran-Lapujade P."/>
            <person name="Daran J.-M."/>
            <person name="Koetter P."/>
            <person name="Petit T."/>
            <person name="Piper M.D.W."/>
            <person name="Pronk J.T."/>
        </authorList>
    </citation>
    <scope>NUCLEOTIDE SEQUENCE [GENOMIC DNA]</scope>
    <scope>VARIANTS ILE-48; SER-59 AND ASN-69</scope>
    <source>
        <strain>CEN.PK 113-7D</strain>
    </source>
</reference>
<reference key="2">
    <citation type="journal article" date="1997" name="Nature">
        <title>The nucleotide sequence of Saccharomyces cerevisiae chromosome XV.</title>
        <authorList>
            <person name="Dujon B."/>
            <person name="Albermann K."/>
            <person name="Aldea M."/>
            <person name="Alexandraki D."/>
            <person name="Ansorge W."/>
            <person name="Arino J."/>
            <person name="Benes V."/>
            <person name="Bohn C."/>
            <person name="Bolotin-Fukuhara M."/>
            <person name="Bordonne R."/>
            <person name="Boyer J."/>
            <person name="Camasses A."/>
            <person name="Casamayor A."/>
            <person name="Casas C."/>
            <person name="Cheret G."/>
            <person name="Cziepluch C."/>
            <person name="Daignan-Fornier B."/>
            <person name="Dang V.-D."/>
            <person name="de Haan M."/>
            <person name="Delius H."/>
            <person name="Durand P."/>
            <person name="Fairhead C."/>
            <person name="Feldmann H."/>
            <person name="Gaillon L."/>
            <person name="Galisson F."/>
            <person name="Gamo F.-J."/>
            <person name="Gancedo C."/>
            <person name="Goffeau A."/>
            <person name="Goulding S.E."/>
            <person name="Grivell L.A."/>
            <person name="Habbig B."/>
            <person name="Hand N.J."/>
            <person name="Hani J."/>
            <person name="Hattenhorst U."/>
            <person name="Hebling U."/>
            <person name="Hernando Y."/>
            <person name="Herrero E."/>
            <person name="Heumann K."/>
            <person name="Hiesel R."/>
            <person name="Hilger F."/>
            <person name="Hofmann B."/>
            <person name="Hollenberg C.P."/>
            <person name="Hughes B."/>
            <person name="Jauniaux J.-C."/>
            <person name="Kalogeropoulos A."/>
            <person name="Katsoulou C."/>
            <person name="Kordes E."/>
            <person name="Lafuente M.J."/>
            <person name="Landt O."/>
            <person name="Louis E.J."/>
            <person name="Maarse A.C."/>
            <person name="Madania A."/>
            <person name="Mannhaupt G."/>
            <person name="Marck C."/>
            <person name="Martin R.P."/>
            <person name="Mewes H.-W."/>
            <person name="Michaux G."/>
            <person name="Paces V."/>
            <person name="Parle-McDermott A.G."/>
            <person name="Pearson B.M."/>
            <person name="Perrin A."/>
            <person name="Pettersson B."/>
            <person name="Poch O."/>
            <person name="Pohl T.M."/>
            <person name="Poirey R."/>
            <person name="Portetelle D."/>
            <person name="Pujol A."/>
            <person name="Purnelle B."/>
            <person name="Ramezani Rad M."/>
            <person name="Rechmann S."/>
            <person name="Schwager C."/>
            <person name="Schweizer M."/>
            <person name="Sor F."/>
            <person name="Sterky F."/>
            <person name="Tarassov I.A."/>
            <person name="Teodoru C."/>
            <person name="Tettelin H."/>
            <person name="Thierry A."/>
            <person name="Tobiasch E."/>
            <person name="Tzermia M."/>
            <person name="Uhlen M."/>
            <person name="Unseld M."/>
            <person name="Valens M."/>
            <person name="Vandenbol M."/>
            <person name="Vetter I."/>
            <person name="Vlcek C."/>
            <person name="Voet M."/>
            <person name="Volckaert G."/>
            <person name="Voss H."/>
            <person name="Wambutt R."/>
            <person name="Wedler H."/>
            <person name="Wiemann S."/>
            <person name="Winsor B."/>
            <person name="Wolfe K.H."/>
            <person name="Zollner A."/>
            <person name="Zumstein E."/>
            <person name="Kleine K."/>
        </authorList>
    </citation>
    <scope>NUCLEOTIDE SEQUENCE [LARGE SCALE GENOMIC DNA]</scope>
    <source>
        <strain>ATCC 204508 / S288c</strain>
    </source>
</reference>
<reference key="3">
    <citation type="journal article" date="2014" name="G3 (Bethesda)">
        <title>The reference genome sequence of Saccharomyces cerevisiae: Then and now.</title>
        <authorList>
            <person name="Engel S.R."/>
            <person name="Dietrich F.S."/>
            <person name="Fisk D.G."/>
            <person name="Binkley G."/>
            <person name="Balakrishnan R."/>
            <person name="Costanzo M.C."/>
            <person name="Dwight S.S."/>
            <person name="Hitz B.C."/>
            <person name="Karra K."/>
            <person name="Nash R.S."/>
            <person name="Weng S."/>
            <person name="Wong E.D."/>
            <person name="Lloyd P."/>
            <person name="Skrzypek M.S."/>
            <person name="Miyasato S.R."/>
            <person name="Simison M."/>
            <person name="Cherry J.M."/>
        </authorList>
    </citation>
    <scope>GENOME REANNOTATION</scope>
    <source>
        <strain>ATCC 204508 / S288c</strain>
    </source>
</reference>
<protein>
    <recommendedName>
        <fullName>Putative uncharacterized protein YOL013W-B</fullName>
    </recommendedName>
</protein>
<keyword id="KW-0472">Membrane</keyword>
<keyword id="KW-0812">Transmembrane</keyword>
<keyword id="KW-1133">Transmembrane helix</keyword>
<organism>
    <name type="scientific">Saccharomyces cerevisiae (strain ATCC 204508 / S288c)</name>
    <name type="common">Baker's yeast</name>
    <dbReference type="NCBI Taxonomy" id="559292"/>
    <lineage>
        <taxon>Eukaryota</taxon>
        <taxon>Fungi</taxon>
        <taxon>Dikarya</taxon>
        <taxon>Ascomycota</taxon>
        <taxon>Saccharomycotina</taxon>
        <taxon>Saccharomycetes</taxon>
        <taxon>Saccharomycetales</taxon>
        <taxon>Saccharomycetaceae</taxon>
        <taxon>Saccharomyces</taxon>
    </lineage>
</organism>
<comment type="subcellular location">
    <subcellularLocation>
        <location evidence="3">Membrane</location>
        <topology evidence="3">Single-pass membrane protein</topology>
    </subcellularLocation>
</comment>
<comment type="caution">
    <text evidence="4">Product of a dubious gene prediction unlikely to encode a functional protein. Because of that it is not part of the S.cerevisiae S288c complete/reference proteome set.</text>
</comment>
<proteinExistence type="uncertain"/>
<name>YO13B_YEAST</name>